<protein>
    <recommendedName>
        <fullName>Transaldolase-3</fullName>
        <ecNumber>2.2.1.2</ecNumber>
    </recommendedName>
    <alternativeName>
        <fullName>Transaldolase III</fullName>
    </alternativeName>
</protein>
<sequence>YGIHCNTLL</sequence>
<accession>P17441</accession>
<name>TAL3_CYBJA</name>
<reference key="1">
    <citation type="journal article" date="1975" name="Arch. Biochem. Biophys.">
        <title>Isolation of a peptide containing a histidinyl-cysteinyl sequence from the active center of transaldolase.</title>
        <authorList>
            <person name="Tsolas O."/>
            <person name="Sun S.C."/>
        </authorList>
    </citation>
    <scope>PROTEIN SEQUENCE</scope>
</reference>
<organism>
    <name type="scientific">Cyberlindnera jadinii</name>
    <name type="common">Torula yeast</name>
    <name type="synonym">Pichia jadinii</name>
    <dbReference type="NCBI Taxonomy" id="4903"/>
    <lineage>
        <taxon>Eukaryota</taxon>
        <taxon>Fungi</taxon>
        <taxon>Dikarya</taxon>
        <taxon>Ascomycota</taxon>
        <taxon>Saccharomycotina</taxon>
        <taxon>Saccharomycetes</taxon>
        <taxon>Phaffomycetales</taxon>
        <taxon>Phaffomycetaceae</taxon>
        <taxon>Cyberlindnera</taxon>
    </lineage>
</organism>
<keyword id="KW-0903">Direct protein sequencing</keyword>
<keyword id="KW-0570">Pentose shunt</keyword>
<keyword id="KW-0704">Schiff base</keyword>
<keyword id="KW-0808">Transferase</keyword>
<proteinExistence type="evidence at protein level"/>
<feature type="chain" id="PRO_0000173572" description="Transaldolase-3">
    <location>
        <begin position="1" status="less than"/>
        <end position="9" status="greater than"/>
    </location>
</feature>
<feature type="non-terminal residue">
    <location>
        <position position="1"/>
    </location>
</feature>
<feature type="non-terminal residue">
    <location>
        <position position="9"/>
    </location>
</feature>
<comment type="function">
    <text>Transaldolase is important for the balance of metabolites in the pentose-phosphate pathway.</text>
</comment>
<comment type="catalytic activity">
    <reaction evidence="2">
        <text>D-sedoheptulose 7-phosphate + D-glyceraldehyde 3-phosphate = D-erythrose 4-phosphate + beta-D-fructose 6-phosphate</text>
        <dbReference type="Rhea" id="RHEA:17053"/>
        <dbReference type="ChEBI" id="CHEBI:16897"/>
        <dbReference type="ChEBI" id="CHEBI:57483"/>
        <dbReference type="ChEBI" id="CHEBI:57634"/>
        <dbReference type="ChEBI" id="CHEBI:59776"/>
        <dbReference type="EC" id="2.2.1.2"/>
    </reaction>
</comment>
<comment type="pathway">
    <text>Carbohydrate degradation; pentose phosphate pathway; D-glyceraldehyde 3-phosphate and beta-D-fructose 6-phosphate from D-ribose 5-phosphate and D-xylulose 5-phosphate (non-oxidative stage): step 2/3.</text>
</comment>
<comment type="subunit">
    <text evidence="1">Homodimer.</text>
</comment>
<comment type="similarity">
    <text evidence="3">Belongs to the transaldolase family. Type 1 subfamily.</text>
</comment>
<evidence type="ECO:0000250" key="1"/>
<evidence type="ECO:0000255" key="2">
    <source>
        <dbReference type="PROSITE-ProRule" id="PRU10019"/>
    </source>
</evidence>
<evidence type="ECO:0000305" key="3"/>
<dbReference type="EC" id="2.2.1.2"/>
<dbReference type="PIR" id="A11497">
    <property type="entry name" value="A11497"/>
</dbReference>
<dbReference type="UniPathway" id="UPA00115">
    <property type="reaction ID" value="UER00414"/>
</dbReference>
<dbReference type="GO" id="GO:0004801">
    <property type="term" value="F:transaldolase activity"/>
    <property type="evidence" value="ECO:0007669"/>
    <property type="project" value="UniProtKB-EC"/>
</dbReference>
<dbReference type="GO" id="GO:0006098">
    <property type="term" value="P:pentose-phosphate shunt"/>
    <property type="evidence" value="ECO:0007669"/>
    <property type="project" value="UniProtKB-UniPathway"/>
</dbReference>